<keyword id="KW-0119">Carbohydrate metabolism</keyword>
<keyword id="KW-0413">Isomerase</keyword>
<keyword id="KW-0479">Metal-binding</keyword>
<keyword id="KW-0862">Zinc</keyword>
<accession>A9N514</accession>
<dbReference type="EC" id="5.1.3.4" evidence="1"/>
<dbReference type="EMBL" id="CP000886">
    <property type="protein sequence ID" value="ABX70791.1"/>
    <property type="molecule type" value="Genomic_DNA"/>
</dbReference>
<dbReference type="RefSeq" id="WP_001170771.1">
    <property type="nucleotide sequence ID" value="NC_010102.1"/>
</dbReference>
<dbReference type="SMR" id="A9N514"/>
<dbReference type="KEGG" id="spq:SPAB_05522"/>
<dbReference type="PATRIC" id="fig|1016998.12.peg.5175"/>
<dbReference type="HOGENOM" id="CLU_006033_5_0_6"/>
<dbReference type="BioCyc" id="SENT1016998:SPAB_RS22550-MONOMER"/>
<dbReference type="UniPathway" id="UPA00263">
    <property type="reaction ID" value="UER00380"/>
</dbReference>
<dbReference type="Proteomes" id="UP000008556">
    <property type="component" value="Chromosome"/>
</dbReference>
<dbReference type="GO" id="GO:0005829">
    <property type="term" value="C:cytosol"/>
    <property type="evidence" value="ECO:0007669"/>
    <property type="project" value="TreeGrafter"/>
</dbReference>
<dbReference type="GO" id="GO:0016832">
    <property type="term" value="F:aldehyde-lyase activity"/>
    <property type="evidence" value="ECO:0007669"/>
    <property type="project" value="TreeGrafter"/>
</dbReference>
<dbReference type="GO" id="GO:0008742">
    <property type="term" value="F:L-ribulose-phosphate 4-epimerase activity"/>
    <property type="evidence" value="ECO:0007669"/>
    <property type="project" value="UniProtKB-UniRule"/>
</dbReference>
<dbReference type="GO" id="GO:0008270">
    <property type="term" value="F:zinc ion binding"/>
    <property type="evidence" value="ECO:0007669"/>
    <property type="project" value="UniProtKB-UniRule"/>
</dbReference>
<dbReference type="GO" id="GO:0019854">
    <property type="term" value="P:L-ascorbic acid catabolic process"/>
    <property type="evidence" value="ECO:0007669"/>
    <property type="project" value="UniProtKB-UniRule"/>
</dbReference>
<dbReference type="GO" id="GO:0019323">
    <property type="term" value="P:pentose catabolic process"/>
    <property type="evidence" value="ECO:0007669"/>
    <property type="project" value="TreeGrafter"/>
</dbReference>
<dbReference type="CDD" id="cd00398">
    <property type="entry name" value="Aldolase_II"/>
    <property type="match status" value="1"/>
</dbReference>
<dbReference type="FunFam" id="3.40.225.10:FF:000001">
    <property type="entry name" value="L-ribulose-5-phosphate 4-epimerase UlaF"/>
    <property type="match status" value="1"/>
</dbReference>
<dbReference type="Gene3D" id="3.40.225.10">
    <property type="entry name" value="Class II aldolase/adducin N-terminal domain"/>
    <property type="match status" value="1"/>
</dbReference>
<dbReference type="HAMAP" id="MF_01952">
    <property type="entry name" value="UlaF"/>
    <property type="match status" value="1"/>
</dbReference>
<dbReference type="InterPro" id="IPR050197">
    <property type="entry name" value="Aldolase_class_II_sugar_metab"/>
</dbReference>
<dbReference type="InterPro" id="IPR001303">
    <property type="entry name" value="Aldolase_II/adducin_N"/>
</dbReference>
<dbReference type="InterPro" id="IPR036409">
    <property type="entry name" value="Aldolase_II/adducin_N_sf"/>
</dbReference>
<dbReference type="InterPro" id="IPR023499">
    <property type="entry name" value="UlaF"/>
</dbReference>
<dbReference type="NCBIfam" id="NF006047">
    <property type="entry name" value="PRK08193.1"/>
    <property type="match status" value="1"/>
</dbReference>
<dbReference type="NCBIfam" id="NF009003">
    <property type="entry name" value="PRK12348.1"/>
    <property type="match status" value="1"/>
</dbReference>
<dbReference type="PANTHER" id="PTHR22789">
    <property type="entry name" value="FUCULOSE PHOSPHATE ALDOLASE"/>
    <property type="match status" value="1"/>
</dbReference>
<dbReference type="PANTHER" id="PTHR22789:SF9">
    <property type="entry name" value="L-RIBULOSE-5-PHOSPHATE 4-EPIMERASE ULAF"/>
    <property type="match status" value="1"/>
</dbReference>
<dbReference type="Pfam" id="PF00596">
    <property type="entry name" value="Aldolase_II"/>
    <property type="match status" value="1"/>
</dbReference>
<dbReference type="SMART" id="SM01007">
    <property type="entry name" value="Aldolase_II"/>
    <property type="match status" value="1"/>
</dbReference>
<dbReference type="SUPFAM" id="SSF53639">
    <property type="entry name" value="AraD/HMP-PK domain-like"/>
    <property type="match status" value="1"/>
</dbReference>
<comment type="function">
    <text evidence="1">Catalyzes the isomerization of L-ribulose 5-phosphate to D-xylulose 5-phosphate. Is involved in the anaerobic L-ascorbate utilization.</text>
</comment>
<comment type="catalytic activity">
    <reaction evidence="1">
        <text>L-ribulose 5-phosphate = D-xylulose 5-phosphate</text>
        <dbReference type="Rhea" id="RHEA:22368"/>
        <dbReference type="ChEBI" id="CHEBI:57737"/>
        <dbReference type="ChEBI" id="CHEBI:58226"/>
        <dbReference type="EC" id="5.1.3.4"/>
    </reaction>
</comment>
<comment type="cofactor">
    <cofactor evidence="1">
        <name>Zn(2+)</name>
        <dbReference type="ChEBI" id="CHEBI:29105"/>
    </cofactor>
    <text evidence="1">Binds 1 zinc ion per subunit.</text>
</comment>
<comment type="pathway">
    <text evidence="1">Cofactor degradation; L-ascorbate degradation; D-xylulose 5-phosphate from L-ascorbate: step 4/4.</text>
</comment>
<comment type="induction">
    <text evidence="1">Induced by L-ascorbate. Repressed by UlaR.</text>
</comment>
<comment type="similarity">
    <text evidence="1">Belongs to the aldolase class II family. AraD/FucA subfamily.</text>
</comment>
<sequence>MQKLKQQVFDANMDLPRYGLVTFTWGNVSAIDRERGLVVIKPSGVAYETMKVDDMVVVDMDGKVVEGRYRPSSDTATHLALYQRYPSLGGVVHTHSTHATAWAQAGMAIPALGTTHADYFFGDIPCTRALSEEEVQGEYELNTGKVIIETLGEVEPLHTPGIVVYQHGPFAWGKDAHDAVHNAVVMEEVARMAWIARGINPALNPIDDYLMNKHFMRKHGPNAYYGQK</sequence>
<name>ULAF_SALPB</name>
<reference key="1">
    <citation type="submission" date="2007-11" db="EMBL/GenBank/DDBJ databases">
        <authorList>
            <consortium name="The Salmonella enterica serovar Paratyphi B Genome Sequencing Project"/>
            <person name="McClelland M."/>
            <person name="Sanderson E.K."/>
            <person name="Porwollik S."/>
            <person name="Spieth J."/>
            <person name="Clifton W.S."/>
            <person name="Fulton R."/>
            <person name="Cordes M."/>
            <person name="Wollam A."/>
            <person name="Shah N."/>
            <person name="Pepin K."/>
            <person name="Bhonagiri V."/>
            <person name="Nash W."/>
            <person name="Johnson M."/>
            <person name="Thiruvilangam P."/>
            <person name="Wilson R."/>
        </authorList>
    </citation>
    <scope>NUCLEOTIDE SEQUENCE [LARGE SCALE GENOMIC DNA]</scope>
    <source>
        <strain>ATCC BAA-1250 / SPB7</strain>
    </source>
</reference>
<organism>
    <name type="scientific">Salmonella paratyphi B (strain ATCC BAA-1250 / SPB7)</name>
    <dbReference type="NCBI Taxonomy" id="1016998"/>
    <lineage>
        <taxon>Bacteria</taxon>
        <taxon>Pseudomonadati</taxon>
        <taxon>Pseudomonadota</taxon>
        <taxon>Gammaproteobacteria</taxon>
        <taxon>Enterobacterales</taxon>
        <taxon>Enterobacteriaceae</taxon>
        <taxon>Salmonella</taxon>
    </lineage>
</organism>
<feature type="chain" id="PRO_1000088486" description="L-ribulose-5-phosphate 4-epimerase UlaF">
    <location>
        <begin position="1"/>
        <end position="228"/>
    </location>
</feature>
<feature type="active site" description="Proton donor/acceptor" evidence="1">
    <location>
        <position position="118"/>
    </location>
</feature>
<feature type="active site" description="Proton donor/acceptor" evidence="1">
    <location>
        <position position="225"/>
    </location>
</feature>
<feature type="binding site" evidence="1">
    <location>
        <begin position="26"/>
        <end position="27"/>
    </location>
    <ligand>
        <name>substrate</name>
    </ligand>
</feature>
<feature type="binding site" evidence="1">
    <location>
        <begin position="43"/>
        <end position="44"/>
    </location>
    <ligand>
        <name>substrate</name>
    </ligand>
</feature>
<feature type="binding site" evidence="1">
    <location>
        <begin position="72"/>
        <end position="73"/>
    </location>
    <ligand>
        <name>substrate</name>
    </ligand>
</feature>
<feature type="binding site" evidence="1">
    <location>
        <position position="74"/>
    </location>
    <ligand>
        <name>Zn(2+)</name>
        <dbReference type="ChEBI" id="CHEBI:29105"/>
    </ligand>
</feature>
<feature type="binding site" evidence="1">
    <location>
        <position position="93"/>
    </location>
    <ligand>
        <name>Zn(2+)</name>
        <dbReference type="ChEBI" id="CHEBI:29105"/>
    </ligand>
</feature>
<feature type="binding site" evidence="1">
    <location>
        <position position="95"/>
    </location>
    <ligand>
        <name>Zn(2+)</name>
        <dbReference type="ChEBI" id="CHEBI:29105"/>
    </ligand>
</feature>
<feature type="binding site" evidence="1">
    <location>
        <position position="167"/>
    </location>
    <ligand>
        <name>Zn(2+)</name>
        <dbReference type="ChEBI" id="CHEBI:29105"/>
    </ligand>
</feature>
<proteinExistence type="inferred from homology"/>
<gene>
    <name evidence="1" type="primary">ulaF</name>
    <name type="ordered locus">SPAB_05522</name>
</gene>
<evidence type="ECO:0000255" key="1">
    <source>
        <dbReference type="HAMAP-Rule" id="MF_01952"/>
    </source>
</evidence>
<protein>
    <recommendedName>
        <fullName evidence="1">L-ribulose-5-phosphate 4-epimerase UlaF</fullName>
        <ecNumber evidence="1">5.1.3.4</ecNumber>
    </recommendedName>
    <alternativeName>
        <fullName evidence="1">L-ascorbate utilization protein F</fullName>
    </alternativeName>
    <alternativeName>
        <fullName evidence="1">Phosphoribulose isomerase</fullName>
    </alternativeName>
</protein>